<accession>B5BCH6</accession>
<name>PDXB_SALPK</name>
<keyword id="KW-0963">Cytoplasm</keyword>
<keyword id="KW-0520">NAD</keyword>
<keyword id="KW-0560">Oxidoreductase</keyword>
<keyword id="KW-0664">Pyridoxine biosynthesis</keyword>
<reference key="1">
    <citation type="journal article" date="2009" name="BMC Genomics">
        <title>Pseudogene accumulation in the evolutionary histories of Salmonella enterica serovars Paratyphi A and Typhi.</title>
        <authorList>
            <person name="Holt K.E."/>
            <person name="Thomson N.R."/>
            <person name="Wain J."/>
            <person name="Langridge G.C."/>
            <person name="Hasan R."/>
            <person name="Bhutta Z.A."/>
            <person name="Quail M.A."/>
            <person name="Norbertczak H."/>
            <person name="Walker D."/>
            <person name="Simmonds M."/>
            <person name="White B."/>
            <person name="Bason N."/>
            <person name="Mungall K."/>
            <person name="Dougan G."/>
            <person name="Parkhill J."/>
        </authorList>
    </citation>
    <scope>NUCLEOTIDE SEQUENCE [LARGE SCALE GENOMIC DNA]</scope>
    <source>
        <strain>AKU_12601</strain>
    </source>
</reference>
<feature type="chain" id="PRO_1000188281" description="Erythronate-4-phosphate dehydrogenase">
    <location>
        <begin position="1"/>
        <end position="378"/>
    </location>
</feature>
<feature type="active site" evidence="1">
    <location>
        <position position="208"/>
    </location>
</feature>
<feature type="active site" evidence="1">
    <location>
        <position position="237"/>
    </location>
</feature>
<feature type="active site" description="Proton donor" evidence="1">
    <location>
        <position position="254"/>
    </location>
</feature>
<feature type="binding site" evidence="1">
    <location>
        <position position="45"/>
    </location>
    <ligand>
        <name>substrate</name>
    </ligand>
</feature>
<feature type="binding site" evidence="1">
    <location>
        <position position="66"/>
    </location>
    <ligand>
        <name>substrate</name>
    </ligand>
</feature>
<feature type="binding site" evidence="1">
    <location>
        <position position="146"/>
    </location>
    <ligand>
        <name>NAD(+)</name>
        <dbReference type="ChEBI" id="CHEBI:57540"/>
    </ligand>
</feature>
<feature type="binding site" evidence="1">
    <location>
        <position position="175"/>
    </location>
    <ligand>
        <name>NAD(+)</name>
        <dbReference type="ChEBI" id="CHEBI:57540"/>
    </ligand>
</feature>
<feature type="binding site" evidence="1">
    <location>
        <position position="232"/>
    </location>
    <ligand>
        <name>NAD(+)</name>
        <dbReference type="ChEBI" id="CHEBI:57540"/>
    </ligand>
</feature>
<feature type="binding site" evidence="1">
    <location>
        <position position="257"/>
    </location>
    <ligand>
        <name>NAD(+)</name>
        <dbReference type="ChEBI" id="CHEBI:57540"/>
    </ligand>
</feature>
<feature type="binding site" evidence="1">
    <location>
        <position position="258"/>
    </location>
    <ligand>
        <name>substrate</name>
    </ligand>
</feature>
<evidence type="ECO:0000255" key="1">
    <source>
        <dbReference type="HAMAP-Rule" id="MF_01825"/>
    </source>
</evidence>
<proteinExistence type="inferred from homology"/>
<gene>
    <name evidence="1" type="primary">pdxB</name>
    <name type="ordered locus">SSPA0458</name>
</gene>
<dbReference type="EC" id="1.1.1.290" evidence="1"/>
<dbReference type="EMBL" id="FM200053">
    <property type="protein sequence ID" value="CAR58587.1"/>
    <property type="molecule type" value="Genomic_DNA"/>
</dbReference>
<dbReference type="RefSeq" id="WP_000699180.1">
    <property type="nucleotide sequence ID" value="NC_011147.1"/>
</dbReference>
<dbReference type="SMR" id="B5BCH6"/>
<dbReference type="KEGG" id="sek:SSPA0458"/>
<dbReference type="HOGENOM" id="CLU_019796_4_0_6"/>
<dbReference type="UniPathway" id="UPA00244">
    <property type="reaction ID" value="UER00310"/>
</dbReference>
<dbReference type="Proteomes" id="UP000001869">
    <property type="component" value="Chromosome"/>
</dbReference>
<dbReference type="GO" id="GO:0005829">
    <property type="term" value="C:cytosol"/>
    <property type="evidence" value="ECO:0007669"/>
    <property type="project" value="TreeGrafter"/>
</dbReference>
<dbReference type="GO" id="GO:0033711">
    <property type="term" value="F:4-phosphoerythronate dehydrogenase activity"/>
    <property type="evidence" value="ECO:0007669"/>
    <property type="project" value="UniProtKB-EC"/>
</dbReference>
<dbReference type="GO" id="GO:0051287">
    <property type="term" value="F:NAD binding"/>
    <property type="evidence" value="ECO:0007669"/>
    <property type="project" value="InterPro"/>
</dbReference>
<dbReference type="GO" id="GO:0046983">
    <property type="term" value="F:protein dimerization activity"/>
    <property type="evidence" value="ECO:0007669"/>
    <property type="project" value="InterPro"/>
</dbReference>
<dbReference type="GO" id="GO:0036001">
    <property type="term" value="P:'de novo' pyridoxal 5'-phosphate biosynthetic process"/>
    <property type="evidence" value="ECO:0007669"/>
    <property type="project" value="TreeGrafter"/>
</dbReference>
<dbReference type="GO" id="GO:0008615">
    <property type="term" value="P:pyridoxine biosynthetic process"/>
    <property type="evidence" value="ECO:0007669"/>
    <property type="project" value="UniProtKB-UniRule"/>
</dbReference>
<dbReference type="CDD" id="cd12158">
    <property type="entry name" value="ErythrP_dh"/>
    <property type="match status" value="1"/>
</dbReference>
<dbReference type="FunFam" id="3.30.1370.170:FF:000001">
    <property type="entry name" value="Erythronate-4-phosphate dehydrogenase"/>
    <property type="match status" value="1"/>
</dbReference>
<dbReference type="FunFam" id="3.40.50.720:FF:000093">
    <property type="entry name" value="Erythronate-4-phosphate dehydrogenase"/>
    <property type="match status" value="1"/>
</dbReference>
<dbReference type="Gene3D" id="3.30.1370.170">
    <property type="match status" value="1"/>
</dbReference>
<dbReference type="Gene3D" id="3.40.50.720">
    <property type="entry name" value="NAD(P)-binding Rossmann-like Domain"/>
    <property type="match status" value="2"/>
</dbReference>
<dbReference type="HAMAP" id="MF_01825">
    <property type="entry name" value="PdxB"/>
    <property type="match status" value="1"/>
</dbReference>
<dbReference type="InterPro" id="IPR006139">
    <property type="entry name" value="D-isomer_2_OHA_DH_cat_dom"/>
</dbReference>
<dbReference type="InterPro" id="IPR029753">
    <property type="entry name" value="D-isomer_DH_CS"/>
</dbReference>
<dbReference type="InterPro" id="IPR029752">
    <property type="entry name" value="D-isomer_DH_CS1"/>
</dbReference>
<dbReference type="InterPro" id="IPR006140">
    <property type="entry name" value="D-isomer_DH_NAD-bd"/>
</dbReference>
<dbReference type="InterPro" id="IPR020921">
    <property type="entry name" value="Erythronate-4-P_DHase"/>
</dbReference>
<dbReference type="InterPro" id="IPR024531">
    <property type="entry name" value="Erythronate-4-P_DHase_dimer"/>
</dbReference>
<dbReference type="InterPro" id="IPR036291">
    <property type="entry name" value="NAD(P)-bd_dom_sf"/>
</dbReference>
<dbReference type="InterPro" id="IPR038251">
    <property type="entry name" value="PdxB_dimer_sf"/>
</dbReference>
<dbReference type="NCBIfam" id="NF001309">
    <property type="entry name" value="PRK00257.1"/>
    <property type="match status" value="1"/>
</dbReference>
<dbReference type="NCBIfam" id="NF011966">
    <property type="entry name" value="PRK15438.1"/>
    <property type="match status" value="1"/>
</dbReference>
<dbReference type="PANTHER" id="PTHR42938">
    <property type="entry name" value="FORMATE DEHYDROGENASE 1"/>
    <property type="match status" value="1"/>
</dbReference>
<dbReference type="PANTHER" id="PTHR42938:SF9">
    <property type="entry name" value="FORMATE DEHYDROGENASE 1"/>
    <property type="match status" value="1"/>
</dbReference>
<dbReference type="Pfam" id="PF00389">
    <property type="entry name" value="2-Hacid_dh"/>
    <property type="match status" value="1"/>
</dbReference>
<dbReference type="Pfam" id="PF02826">
    <property type="entry name" value="2-Hacid_dh_C"/>
    <property type="match status" value="1"/>
</dbReference>
<dbReference type="Pfam" id="PF11890">
    <property type="entry name" value="DUF3410"/>
    <property type="match status" value="1"/>
</dbReference>
<dbReference type="SUPFAM" id="SSF52283">
    <property type="entry name" value="Formate/glycerate dehydrogenase catalytic domain-like"/>
    <property type="match status" value="1"/>
</dbReference>
<dbReference type="SUPFAM" id="SSF51735">
    <property type="entry name" value="NAD(P)-binding Rossmann-fold domains"/>
    <property type="match status" value="1"/>
</dbReference>
<dbReference type="PROSITE" id="PS00065">
    <property type="entry name" value="D_2_HYDROXYACID_DH_1"/>
    <property type="match status" value="1"/>
</dbReference>
<dbReference type="PROSITE" id="PS00671">
    <property type="entry name" value="D_2_HYDROXYACID_DH_3"/>
    <property type="match status" value="1"/>
</dbReference>
<comment type="function">
    <text evidence="1">Catalyzes the oxidation of erythronate-4-phosphate to 3-hydroxy-2-oxo-4-phosphonooxybutanoate.</text>
</comment>
<comment type="catalytic activity">
    <reaction evidence="1">
        <text>4-phospho-D-erythronate + NAD(+) = (R)-3-hydroxy-2-oxo-4-phosphooxybutanoate + NADH + H(+)</text>
        <dbReference type="Rhea" id="RHEA:18829"/>
        <dbReference type="ChEBI" id="CHEBI:15378"/>
        <dbReference type="ChEBI" id="CHEBI:57540"/>
        <dbReference type="ChEBI" id="CHEBI:57945"/>
        <dbReference type="ChEBI" id="CHEBI:58538"/>
        <dbReference type="ChEBI" id="CHEBI:58766"/>
        <dbReference type="EC" id="1.1.1.290"/>
    </reaction>
</comment>
<comment type="pathway">
    <text evidence="1">Cofactor biosynthesis; pyridoxine 5'-phosphate biosynthesis; pyridoxine 5'-phosphate from D-erythrose 4-phosphate: step 2/5.</text>
</comment>
<comment type="subunit">
    <text evidence="1">Homodimer.</text>
</comment>
<comment type="subcellular location">
    <subcellularLocation>
        <location evidence="1">Cytoplasm</location>
    </subcellularLocation>
</comment>
<comment type="similarity">
    <text evidence="1">Belongs to the D-isomer specific 2-hydroxyacid dehydrogenase family. PdxB subfamily.</text>
</comment>
<protein>
    <recommendedName>
        <fullName evidence="1">Erythronate-4-phosphate dehydrogenase</fullName>
        <ecNumber evidence="1">1.1.1.290</ecNumber>
    </recommendedName>
</protein>
<organism>
    <name type="scientific">Salmonella paratyphi A (strain AKU_12601)</name>
    <dbReference type="NCBI Taxonomy" id="554290"/>
    <lineage>
        <taxon>Bacteria</taxon>
        <taxon>Pseudomonadati</taxon>
        <taxon>Pseudomonadota</taxon>
        <taxon>Gammaproteobacteria</taxon>
        <taxon>Enterobacterales</taxon>
        <taxon>Enterobacteriaceae</taxon>
        <taxon>Salmonella</taxon>
    </lineage>
</organism>
<sequence>MKILVDENMPYARELFSRLGEVKAVPGRPIPVEELNHADALMVRSVTKVNESLLSGTPINFVGTATAGTDHVDEAWLKQAGIGFSAAPGCNAIAVVEYVFSALLMLAERDGFSLRDRTIGIVGVGNVGSRLQTRLEALGIRTLLCDPPRAARGDEGDFRTLDELVQEADVLTFHTPLYKDGPYKTLHLADETLIRRLKPGVILINACRGPVVDNAALLARLNAGQPLSVVLDVWEGEPDLNVALLEAVDIGTSHIAGYTLEGKARGTTQVFEAYSAFIGREQRVALETLLPAPEFDRITLHGPLDQPTLKRLAHLVYDVRRDDAPLRKVAGIPGEFDKLRKNYLERREWSSLYVMCDDETAAALLCKLGFNAVHHPAH</sequence>